<dbReference type="EC" id="2.5.1.-"/>
<dbReference type="EMBL" id="AE016814">
    <property type="protein sequence ID" value="AAS50251.1"/>
    <property type="molecule type" value="Genomic_DNA"/>
</dbReference>
<dbReference type="RefSeq" id="NP_982427.1">
    <property type="nucleotide sequence ID" value="NM_207780.1"/>
</dbReference>
<dbReference type="SMR" id="Q75F43"/>
<dbReference type="FunCoup" id="Q75F43">
    <property type="interactions" value="850"/>
</dbReference>
<dbReference type="STRING" id="284811.Q75F43"/>
<dbReference type="EnsemblFungi" id="AAS50251">
    <property type="protein sequence ID" value="AAS50251"/>
    <property type="gene ID" value="AGOS_AAL115W"/>
</dbReference>
<dbReference type="GeneID" id="4618542"/>
<dbReference type="KEGG" id="ago:AGOS_AAL115W"/>
<dbReference type="eggNOG" id="KOG1380">
    <property type="taxonomic scope" value="Eukaryota"/>
</dbReference>
<dbReference type="HOGENOM" id="CLU_029631_2_1_1"/>
<dbReference type="InParanoid" id="Q75F43"/>
<dbReference type="OMA" id="MGREPDF"/>
<dbReference type="OrthoDB" id="5211at2759"/>
<dbReference type="Proteomes" id="UP000000591">
    <property type="component" value="Chromosome I"/>
</dbReference>
<dbReference type="GO" id="GO:0031966">
    <property type="term" value="C:mitochondrial membrane"/>
    <property type="evidence" value="ECO:0007669"/>
    <property type="project" value="UniProtKB-SubCell"/>
</dbReference>
<dbReference type="GO" id="GO:0005739">
    <property type="term" value="C:mitochondrion"/>
    <property type="evidence" value="ECO:0000318"/>
    <property type="project" value="GO_Central"/>
</dbReference>
<dbReference type="GO" id="GO:0008495">
    <property type="term" value="F:protoheme IX farnesyltransferase activity"/>
    <property type="evidence" value="ECO:0000318"/>
    <property type="project" value="GO_Central"/>
</dbReference>
<dbReference type="GO" id="GO:0006784">
    <property type="term" value="P:heme A biosynthetic process"/>
    <property type="evidence" value="ECO:0000318"/>
    <property type="project" value="GO_Central"/>
</dbReference>
<dbReference type="CDD" id="cd13957">
    <property type="entry name" value="PT_UbiA_Cox10"/>
    <property type="match status" value="1"/>
</dbReference>
<dbReference type="FunFam" id="1.10.357.140:FF:000004">
    <property type="entry name" value="Protoheme IX farnesyltransferase, mitochondrial"/>
    <property type="match status" value="1"/>
</dbReference>
<dbReference type="Gene3D" id="1.10.357.140">
    <property type="entry name" value="UbiA prenyltransferase"/>
    <property type="match status" value="1"/>
</dbReference>
<dbReference type="InterPro" id="IPR006369">
    <property type="entry name" value="Protohaem_IX_farnesylTrfase"/>
</dbReference>
<dbReference type="InterPro" id="IPR016315">
    <property type="entry name" value="Protohaem_IX_farnesylTrfase_mt"/>
</dbReference>
<dbReference type="InterPro" id="IPR000537">
    <property type="entry name" value="UbiA_prenyltransferase"/>
</dbReference>
<dbReference type="InterPro" id="IPR030470">
    <property type="entry name" value="UbiA_prenylTrfase_CS"/>
</dbReference>
<dbReference type="InterPro" id="IPR044878">
    <property type="entry name" value="UbiA_sf"/>
</dbReference>
<dbReference type="NCBIfam" id="TIGR01473">
    <property type="entry name" value="cyoE_ctaB"/>
    <property type="match status" value="1"/>
</dbReference>
<dbReference type="PANTHER" id="PTHR43448">
    <property type="entry name" value="PROTOHEME IX FARNESYLTRANSFERASE, MITOCHONDRIAL"/>
    <property type="match status" value="1"/>
</dbReference>
<dbReference type="PANTHER" id="PTHR43448:SF2">
    <property type="entry name" value="PROTOHEME IX FARNESYLTRANSFERASE, MITOCHONDRIAL"/>
    <property type="match status" value="1"/>
</dbReference>
<dbReference type="Pfam" id="PF01040">
    <property type="entry name" value="UbiA"/>
    <property type="match status" value="1"/>
</dbReference>
<dbReference type="PIRSF" id="PIRSF001773">
    <property type="entry name" value="COX10"/>
    <property type="match status" value="1"/>
</dbReference>
<dbReference type="PROSITE" id="PS00943">
    <property type="entry name" value="UBIA"/>
    <property type="match status" value="1"/>
</dbReference>
<accession>Q75F43</accession>
<keyword id="KW-0350">Heme biosynthesis</keyword>
<keyword id="KW-0472">Membrane</keyword>
<keyword id="KW-0496">Mitochondrion</keyword>
<keyword id="KW-1185">Reference proteome</keyword>
<keyword id="KW-0808">Transferase</keyword>
<keyword id="KW-0809">Transit peptide</keyword>
<keyword id="KW-0812">Transmembrane</keyword>
<keyword id="KW-1133">Transmembrane helix</keyword>
<protein>
    <recommendedName>
        <fullName>Protoheme IX farnesyltransferase, mitochondrial</fullName>
        <ecNumber>2.5.1.-</ecNumber>
    </recommendedName>
    <alternativeName>
        <fullName>Heme O synthase</fullName>
    </alternativeName>
</protein>
<feature type="transit peptide" description="Mitochondrion" evidence="2">
    <location>
        <begin position="1"/>
        <end position="35"/>
    </location>
</feature>
<feature type="chain" id="PRO_0000045411" description="Protoheme IX farnesyltransferase, mitochondrial">
    <location>
        <begin position="36"/>
        <end position="435"/>
    </location>
</feature>
<feature type="transmembrane region" description="Helical" evidence="2">
    <location>
        <begin position="135"/>
        <end position="155"/>
    </location>
</feature>
<feature type="transmembrane region" description="Helical" evidence="2">
    <location>
        <begin position="157"/>
        <end position="177"/>
    </location>
</feature>
<feature type="transmembrane region" description="Helical" evidence="2">
    <location>
        <begin position="212"/>
        <end position="232"/>
    </location>
</feature>
<feature type="transmembrane region" description="Helical" evidence="2">
    <location>
        <begin position="250"/>
        <end position="270"/>
    </location>
</feature>
<feature type="transmembrane region" description="Helical" evidence="2">
    <location>
        <begin position="324"/>
        <end position="344"/>
    </location>
</feature>
<feature type="transmembrane region" description="Helical" evidence="2">
    <location>
        <begin position="401"/>
        <end position="421"/>
    </location>
</feature>
<proteinExistence type="inferred from homology"/>
<name>COX10_EREGS</name>
<sequence length="435" mass="48116">MPALCATYLIHSGNLRACLRIVPLTKPSVVIAYRHLSKSSSKIAPAAALNTAPIEFTPNTSAASLHERSTVIKDAARSALRCNDTTPTPALPFDVKRVDKANRAAGRKLPAASGVLSAYALMGPYIQLAKPRLTVLVMLSAICSYALSPYPATVLELLSLTVGTTLCSAAANGINMGREPDFDRQMMRTQARPVVRGLVTPMQAYKFSAVSGVIGTAILYAGVNPTVALLGASNIVLYSWFYTSLKRKHIINTWFGAITGAIPPLMGWAAASPLTHPGCWCLAGLLYAWQFPHFNTLSHNIRNEYKNAGHVMTAWKNPKLNARVALRYSLLMFPLCFGLSYYGITDWTYQIDSALVNGWMSFWAFKFWWQQRYNYSKKVYNNKAEFNKGMVLANVYARKTFWVSVLHLPAVLILAIVHKKGRWDWLFSDEGKLVA</sequence>
<reference key="1">
    <citation type="journal article" date="2004" name="Science">
        <title>The Ashbya gossypii genome as a tool for mapping the ancient Saccharomyces cerevisiae genome.</title>
        <authorList>
            <person name="Dietrich F.S."/>
            <person name="Voegeli S."/>
            <person name="Brachat S."/>
            <person name="Lerch A."/>
            <person name="Gates K."/>
            <person name="Steiner S."/>
            <person name="Mohr C."/>
            <person name="Poehlmann R."/>
            <person name="Luedi P."/>
            <person name="Choi S."/>
            <person name="Wing R.A."/>
            <person name="Flavier A."/>
            <person name="Gaffney T.D."/>
            <person name="Philippsen P."/>
        </authorList>
    </citation>
    <scope>NUCLEOTIDE SEQUENCE [LARGE SCALE GENOMIC DNA]</scope>
    <source>
        <strain>ATCC 10895 / CBS 109.51 / FGSC 9923 / NRRL Y-1056</strain>
    </source>
</reference>
<reference key="2">
    <citation type="journal article" date="2013" name="G3 (Bethesda)">
        <title>Genomes of Ashbya fungi isolated from insects reveal four mating-type loci, numerous translocations, lack of transposons, and distinct gene duplications.</title>
        <authorList>
            <person name="Dietrich F.S."/>
            <person name="Voegeli S."/>
            <person name="Kuo S."/>
            <person name="Philippsen P."/>
        </authorList>
    </citation>
    <scope>GENOME REANNOTATION</scope>
    <source>
        <strain>ATCC 10895 / CBS 109.51 / FGSC 9923 / NRRL Y-1056</strain>
    </source>
</reference>
<organism>
    <name type="scientific">Eremothecium gossypii (strain ATCC 10895 / CBS 109.51 / FGSC 9923 / NRRL Y-1056)</name>
    <name type="common">Yeast</name>
    <name type="synonym">Ashbya gossypii</name>
    <dbReference type="NCBI Taxonomy" id="284811"/>
    <lineage>
        <taxon>Eukaryota</taxon>
        <taxon>Fungi</taxon>
        <taxon>Dikarya</taxon>
        <taxon>Ascomycota</taxon>
        <taxon>Saccharomycotina</taxon>
        <taxon>Saccharomycetes</taxon>
        <taxon>Saccharomycetales</taxon>
        <taxon>Saccharomycetaceae</taxon>
        <taxon>Eremothecium</taxon>
    </lineage>
</organism>
<comment type="function">
    <text evidence="1">Converts protoheme IX and farnesyl diphosphate to heme O.</text>
</comment>
<comment type="subcellular location">
    <subcellularLocation>
        <location>Mitochondrion membrane</location>
        <topology>Multi-pass membrane protein</topology>
    </subcellularLocation>
</comment>
<comment type="similarity">
    <text evidence="3">Belongs to the UbiA prenyltransferase family.</text>
</comment>
<gene>
    <name type="primary">COX10</name>
    <name type="ordered locus">AAL115W</name>
</gene>
<evidence type="ECO:0000250" key="1"/>
<evidence type="ECO:0000255" key="2"/>
<evidence type="ECO:0000305" key="3"/>